<organism>
    <name type="scientific">Oryza sativa subsp. indica</name>
    <name type="common">Rice</name>
    <dbReference type="NCBI Taxonomy" id="39946"/>
    <lineage>
        <taxon>Eukaryota</taxon>
        <taxon>Viridiplantae</taxon>
        <taxon>Streptophyta</taxon>
        <taxon>Embryophyta</taxon>
        <taxon>Tracheophyta</taxon>
        <taxon>Spermatophyta</taxon>
        <taxon>Magnoliopsida</taxon>
        <taxon>Liliopsida</taxon>
        <taxon>Poales</taxon>
        <taxon>Poaceae</taxon>
        <taxon>BOP clade</taxon>
        <taxon>Oryzoideae</taxon>
        <taxon>Oryzeae</taxon>
        <taxon>Oryzinae</taxon>
        <taxon>Oryza</taxon>
        <taxon>Oryza sativa</taxon>
    </lineage>
</organism>
<comment type="function">
    <text>Core component of nucleosome. Nucleosomes wrap and compact DNA into chromatin, limiting DNA accessibility to the cellular machineries which require DNA as a template. Histones thereby play a central role in transcription regulation, DNA repair, DNA replication and chromosomal stability. DNA accessibility is regulated via a complex set of post-translational modifications of histones, also called histone code, and nucleosome remodeling.</text>
</comment>
<comment type="subunit">
    <text>The nucleosome is a histone octamer containing two molecules each of H2A, H2B, H3 and H4 assembled in one H3-H4 heterotetramer and two H2A-H2B heterodimers. The octamer wraps approximately 147 bp of DNA.</text>
</comment>
<comment type="subcellular location">
    <subcellularLocation>
        <location evidence="1">Nucleus</location>
    </subcellularLocation>
    <subcellularLocation>
        <location evidence="1">Chromosome</location>
    </subcellularLocation>
</comment>
<comment type="similarity">
    <text evidence="2">Belongs to the histone H2A family.</text>
</comment>
<accession>A2ZK26</accession>
<evidence type="ECO:0000250" key="1"/>
<evidence type="ECO:0000305" key="2"/>
<keyword id="KW-0158">Chromosome</keyword>
<keyword id="KW-0238">DNA-binding</keyword>
<keyword id="KW-0544">Nucleosome core</keyword>
<keyword id="KW-0539">Nucleus</keyword>
<keyword id="KW-1185">Reference proteome</keyword>
<name>H2A8_ORYSI</name>
<sequence>MAGRGKAIGAGAAKKATSRSSKGGLQFPVGRIARFLKAGKYAERVGAGAPVYLAAVLEYLAAEVLELAGNAARDNKKTRIVPRHIQLAVRNDEELTKLLGGATIASGGVMPNIHQHLLPKKAGSSKASHADDDDN</sequence>
<dbReference type="EMBL" id="CM000137">
    <property type="protein sequence ID" value="EAY82960.1"/>
    <property type="molecule type" value="Genomic_DNA"/>
</dbReference>
<dbReference type="SMR" id="A2ZK26"/>
<dbReference type="STRING" id="39946.A2ZK26"/>
<dbReference type="EnsemblPlants" id="BGIOSGA036274-TA">
    <property type="protein sequence ID" value="BGIOSGA036274-PA"/>
    <property type="gene ID" value="BGIOSGA036274"/>
</dbReference>
<dbReference type="Gramene" id="BGIOSGA036274-TA">
    <property type="protein sequence ID" value="BGIOSGA036274-PA"/>
    <property type="gene ID" value="BGIOSGA036274"/>
</dbReference>
<dbReference type="HOGENOM" id="CLU_062828_3_0_1"/>
<dbReference type="OMA" id="XTRIIPR"/>
<dbReference type="Proteomes" id="UP000007015">
    <property type="component" value="Chromosome 12"/>
</dbReference>
<dbReference type="GO" id="GO:0000786">
    <property type="term" value="C:nucleosome"/>
    <property type="evidence" value="ECO:0007669"/>
    <property type="project" value="UniProtKB-KW"/>
</dbReference>
<dbReference type="GO" id="GO:0005634">
    <property type="term" value="C:nucleus"/>
    <property type="evidence" value="ECO:0007669"/>
    <property type="project" value="UniProtKB-SubCell"/>
</dbReference>
<dbReference type="GO" id="GO:0003677">
    <property type="term" value="F:DNA binding"/>
    <property type="evidence" value="ECO:0007669"/>
    <property type="project" value="UniProtKB-KW"/>
</dbReference>
<dbReference type="GO" id="GO:0046982">
    <property type="term" value="F:protein heterodimerization activity"/>
    <property type="evidence" value="ECO:0007669"/>
    <property type="project" value="InterPro"/>
</dbReference>
<dbReference type="GO" id="GO:0030527">
    <property type="term" value="F:structural constituent of chromatin"/>
    <property type="evidence" value="ECO:0007669"/>
    <property type="project" value="InterPro"/>
</dbReference>
<dbReference type="CDD" id="cd00074">
    <property type="entry name" value="HFD_H2A"/>
    <property type="match status" value="1"/>
</dbReference>
<dbReference type="FunFam" id="1.10.20.10:FF:000009">
    <property type="entry name" value="Histone H2A"/>
    <property type="match status" value="1"/>
</dbReference>
<dbReference type="Gene3D" id="1.10.20.10">
    <property type="entry name" value="Histone, subunit A"/>
    <property type="match status" value="1"/>
</dbReference>
<dbReference type="InterPro" id="IPR009072">
    <property type="entry name" value="Histone-fold"/>
</dbReference>
<dbReference type="InterPro" id="IPR002119">
    <property type="entry name" value="Histone_H2A"/>
</dbReference>
<dbReference type="InterPro" id="IPR007125">
    <property type="entry name" value="Histone_H2A/H2B/H3"/>
</dbReference>
<dbReference type="InterPro" id="IPR032454">
    <property type="entry name" value="Histone_H2A_C"/>
</dbReference>
<dbReference type="PANTHER" id="PTHR23430">
    <property type="entry name" value="HISTONE H2A"/>
    <property type="match status" value="1"/>
</dbReference>
<dbReference type="Pfam" id="PF00125">
    <property type="entry name" value="Histone"/>
    <property type="match status" value="1"/>
</dbReference>
<dbReference type="Pfam" id="PF16211">
    <property type="entry name" value="Histone_H2A_C"/>
    <property type="match status" value="1"/>
</dbReference>
<dbReference type="PRINTS" id="PR00620">
    <property type="entry name" value="HISTONEH2A"/>
</dbReference>
<dbReference type="SMART" id="SM00414">
    <property type="entry name" value="H2A"/>
    <property type="match status" value="1"/>
</dbReference>
<dbReference type="SUPFAM" id="SSF47113">
    <property type="entry name" value="Histone-fold"/>
    <property type="match status" value="1"/>
</dbReference>
<gene>
    <name type="ORF">OsI_036919</name>
</gene>
<protein>
    <recommendedName>
        <fullName>Probable histone H2A.8</fullName>
    </recommendedName>
</protein>
<feature type="chain" id="PRO_0000296126" description="Probable histone H2A.8">
    <location>
        <begin position="1"/>
        <end position="135"/>
    </location>
</feature>
<reference key="1">
    <citation type="journal article" date="2005" name="PLoS Biol.">
        <title>The genomes of Oryza sativa: a history of duplications.</title>
        <authorList>
            <person name="Yu J."/>
            <person name="Wang J."/>
            <person name="Lin W."/>
            <person name="Li S."/>
            <person name="Li H."/>
            <person name="Zhou J."/>
            <person name="Ni P."/>
            <person name="Dong W."/>
            <person name="Hu S."/>
            <person name="Zeng C."/>
            <person name="Zhang J."/>
            <person name="Zhang Y."/>
            <person name="Li R."/>
            <person name="Xu Z."/>
            <person name="Li S."/>
            <person name="Li X."/>
            <person name="Zheng H."/>
            <person name="Cong L."/>
            <person name="Lin L."/>
            <person name="Yin J."/>
            <person name="Geng J."/>
            <person name="Li G."/>
            <person name="Shi J."/>
            <person name="Liu J."/>
            <person name="Lv H."/>
            <person name="Li J."/>
            <person name="Wang J."/>
            <person name="Deng Y."/>
            <person name="Ran L."/>
            <person name="Shi X."/>
            <person name="Wang X."/>
            <person name="Wu Q."/>
            <person name="Li C."/>
            <person name="Ren X."/>
            <person name="Wang J."/>
            <person name="Wang X."/>
            <person name="Li D."/>
            <person name="Liu D."/>
            <person name="Zhang X."/>
            <person name="Ji Z."/>
            <person name="Zhao W."/>
            <person name="Sun Y."/>
            <person name="Zhang Z."/>
            <person name="Bao J."/>
            <person name="Han Y."/>
            <person name="Dong L."/>
            <person name="Ji J."/>
            <person name="Chen P."/>
            <person name="Wu S."/>
            <person name="Liu J."/>
            <person name="Xiao Y."/>
            <person name="Bu D."/>
            <person name="Tan J."/>
            <person name="Yang L."/>
            <person name="Ye C."/>
            <person name="Zhang J."/>
            <person name="Xu J."/>
            <person name="Zhou Y."/>
            <person name="Yu Y."/>
            <person name="Zhang B."/>
            <person name="Zhuang S."/>
            <person name="Wei H."/>
            <person name="Liu B."/>
            <person name="Lei M."/>
            <person name="Yu H."/>
            <person name="Li Y."/>
            <person name="Xu H."/>
            <person name="Wei S."/>
            <person name="He X."/>
            <person name="Fang L."/>
            <person name="Zhang Z."/>
            <person name="Zhang Y."/>
            <person name="Huang X."/>
            <person name="Su Z."/>
            <person name="Tong W."/>
            <person name="Li J."/>
            <person name="Tong Z."/>
            <person name="Li S."/>
            <person name="Ye J."/>
            <person name="Wang L."/>
            <person name="Fang L."/>
            <person name="Lei T."/>
            <person name="Chen C.-S."/>
            <person name="Chen H.-C."/>
            <person name="Xu Z."/>
            <person name="Li H."/>
            <person name="Huang H."/>
            <person name="Zhang F."/>
            <person name="Xu H."/>
            <person name="Li N."/>
            <person name="Zhao C."/>
            <person name="Li S."/>
            <person name="Dong L."/>
            <person name="Huang Y."/>
            <person name="Li L."/>
            <person name="Xi Y."/>
            <person name="Qi Q."/>
            <person name="Li W."/>
            <person name="Zhang B."/>
            <person name="Hu W."/>
            <person name="Zhang Y."/>
            <person name="Tian X."/>
            <person name="Jiao Y."/>
            <person name="Liang X."/>
            <person name="Jin J."/>
            <person name="Gao L."/>
            <person name="Zheng W."/>
            <person name="Hao B."/>
            <person name="Liu S.-M."/>
            <person name="Wang W."/>
            <person name="Yuan L."/>
            <person name="Cao M."/>
            <person name="McDermott J."/>
            <person name="Samudrala R."/>
            <person name="Wang J."/>
            <person name="Wong G.K.-S."/>
            <person name="Yang H."/>
        </authorList>
    </citation>
    <scope>NUCLEOTIDE SEQUENCE [LARGE SCALE GENOMIC DNA]</scope>
    <source>
        <strain>cv. 93-11</strain>
    </source>
</reference>
<proteinExistence type="inferred from homology"/>